<accession>Q06SI8</accession>
<gene>
    <name evidence="2" type="primary">psaC</name>
</gene>
<evidence type="ECO:0000250" key="1"/>
<evidence type="ECO:0000255" key="2">
    <source>
        <dbReference type="HAMAP-Rule" id="MF_01303"/>
    </source>
</evidence>
<reference key="1">
    <citation type="journal article" date="2006" name="Mol. Genet. Genomics">
        <title>Distinctive architecture of the chloroplast genome in the chlorophycean green alga Stigeoclonium helveticum.</title>
        <authorList>
            <person name="Belanger A.-S."/>
            <person name="Brouard J.-S."/>
            <person name="Charlebois P."/>
            <person name="Otis C."/>
            <person name="Lemieux C."/>
            <person name="Turmel M."/>
        </authorList>
    </citation>
    <scope>NUCLEOTIDE SEQUENCE [LARGE SCALE GENOMIC DNA]</scope>
    <source>
        <strain>UTEX 441</strain>
    </source>
</reference>
<feature type="initiator methionine" description="Removed" evidence="1">
    <location>
        <position position="1"/>
    </location>
</feature>
<feature type="chain" id="PRO_0000276004" description="Photosystem I iron-sulfur center">
    <location>
        <begin position="2"/>
        <end position="81"/>
    </location>
</feature>
<feature type="domain" description="4Fe-4S ferredoxin-type 1" evidence="2">
    <location>
        <begin position="2"/>
        <end position="31"/>
    </location>
</feature>
<feature type="domain" description="4Fe-4S ferredoxin-type 2" evidence="2">
    <location>
        <begin position="39"/>
        <end position="68"/>
    </location>
</feature>
<feature type="binding site" evidence="2">
    <location>
        <position position="11"/>
    </location>
    <ligand>
        <name>[4Fe-4S] cluster</name>
        <dbReference type="ChEBI" id="CHEBI:49883"/>
        <label>1</label>
    </ligand>
</feature>
<feature type="binding site" evidence="2">
    <location>
        <position position="14"/>
    </location>
    <ligand>
        <name>[4Fe-4S] cluster</name>
        <dbReference type="ChEBI" id="CHEBI:49883"/>
        <label>1</label>
    </ligand>
</feature>
<feature type="binding site" evidence="2">
    <location>
        <position position="17"/>
    </location>
    <ligand>
        <name>[4Fe-4S] cluster</name>
        <dbReference type="ChEBI" id="CHEBI:49883"/>
        <label>1</label>
    </ligand>
</feature>
<feature type="binding site" evidence="2">
    <location>
        <position position="21"/>
    </location>
    <ligand>
        <name>[4Fe-4S] cluster</name>
        <dbReference type="ChEBI" id="CHEBI:49883"/>
        <label>2</label>
    </ligand>
</feature>
<feature type="binding site" evidence="2">
    <location>
        <position position="48"/>
    </location>
    <ligand>
        <name>[4Fe-4S] cluster</name>
        <dbReference type="ChEBI" id="CHEBI:49883"/>
        <label>2</label>
    </ligand>
</feature>
<feature type="binding site" evidence="2">
    <location>
        <position position="51"/>
    </location>
    <ligand>
        <name>[4Fe-4S] cluster</name>
        <dbReference type="ChEBI" id="CHEBI:49883"/>
        <label>2</label>
    </ligand>
</feature>
<feature type="binding site" evidence="2">
    <location>
        <position position="54"/>
    </location>
    <ligand>
        <name>[4Fe-4S] cluster</name>
        <dbReference type="ChEBI" id="CHEBI:49883"/>
        <label>2</label>
    </ligand>
</feature>
<feature type="binding site" evidence="2">
    <location>
        <position position="58"/>
    </location>
    <ligand>
        <name>[4Fe-4S] cluster</name>
        <dbReference type="ChEBI" id="CHEBI:49883"/>
        <label>1</label>
    </ligand>
</feature>
<proteinExistence type="inferred from homology"/>
<name>PSAC_STIHE</name>
<keyword id="KW-0004">4Fe-4S</keyword>
<keyword id="KW-0150">Chloroplast</keyword>
<keyword id="KW-0249">Electron transport</keyword>
<keyword id="KW-0408">Iron</keyword>
<keyword id="KW-0411">Iron-sulfur</keyword>
<keyword id="KW-0472">Membrane</keyword>
<keyword id="KW-0479">Metal-binding</keyword>
<keyword id="KW-0560">Oxidoreductase</keyword>
<keyword id="KW-0602">Photosynthesis</keyword>
<keyword id="KW-0603">Photosystem I</keyword>
<keyword id="KW-0934">Plastid</keyword>
<keyword id="KW-0677">Repeat</keyword>
<keyword id="KW-0793">Thylakoid</keyword>
<keyword id="KW-0813">Transport</keyword>
<protein>
    <recommendedName>
        <fullName evidence="2">Photosystem I iron-sulfur center</fullName>
        <ecNumber evidence="2">1.97.1.12</ecNumber>
    </recommendedName>
    <alternativeName>
        <fullName evidence="2">9 kDa polypeptide</fullName>
    </alternativeName>
    <alternativeName>
        <fullName evidence="2">PSI-C</fullName>
    </alternativeName>
    <alternativeName>
        <fullName evidence="2">Photosystem I subunit VII</fullName>
    </alternativeName>
    <alternativeName>
        <fullName evidence="2">PsaC</fullName>
    </alternativeName>
</protein>
<geneLocation type="chloroplast"/>
<dbReference type="EC" id="1.97.1.12" evidence="2"/>
<dbReference type="EMBL" id="DQ630521">
    <property type="protein sequence ID" value="ABF60208.1"/>
    <property type="molecule type" value="Genomic_DNA"/>
</dbReference>
<dbReference type="RefSeq" id="YP_764378.1">
    <property type="nucleotide sequence ID" value="NC_008372.1"/>
</dbReference>
<dbReference type="SMR" id="Q06SI8"/>
<dbReference type="GeneID" id="4308348"/>
<dbReference type="GO" id="GO:0009535">
    <property type="term" value="C:chloroplast thylakoid membrane"/>
    <property type="evidence" value="ECO:0007669"/>
    <property type="project" value="UniProtKB-SubCell"/>
</dbReference>
<dbReference type="GO" id="GO:0009522">
    <property type="term" value="C:photosystem I"/>
    <property type="evidence" value="ECO:0007669"/>
    <property type="project" value="UniProtKB-KW"/>
</dbReference>
<dbReference type="GO" id="GO:0051539">
    <property type="term" value="F:4 iron, 4 sulfur cluster binding"/>
    <property type="evidence" value="ECO:0007669"/>
    <property type="project" value="UniProtKB-KW"/>
</dbReference>
<dbReference type="GO" id="GO:0009055">
    <property type="term" value="F:electron transfer activity"/>
    <property type="evidence" value="ECO:0007669"/>
    <property type="project" value="UniProtKB-UniRule"/>
</dbReference>
<dbReference type="GO" id="GO:0046872">
    <property type="term" value="F:metal ion binding"/>
    <property type="evidence" value="ECO:0007669"/>
    <property type="project" value="UniProtKB-KW"/>
</dbReference>
<dbReference type="GO" id="GO:0016491">
    <property type="term" value="F:oxidoreductase activity"/>
    <property type="evidence" value="ECO:0007669"/>
    <property type="project" value="UniProtKB-KW"/>
</dbReference>
<dbReference type="GO" id="GO:0009773">
    <property type="term" value="P:photosynthetic electron transport in photosystem I"/>
    <property type="evidence" value="ECO:0007669"/>
    <property type="project" value="InterPro"/>
</dbReference>
<dbReference type="FunFam" id="3.30.70.20:FF:000001">
    <property type="entry name" value="Photosystem I iron-sulfur center"/>
    <property type="match status" value="1"/>
</dbReference>
<dbReference type="Gene3D" id="3.30.70.20">
    <property type="match status" value="1"/>
</dbReference>
<dbReference type="HAMAP" id="MF_01303">
    <property type="entry name" value="PSI_PsaC"/>
    <property type="match status" value="1"/>
</dbReference>
<dbReference type="InterPro" id="IPR017896">
    <property type="entry name" value="4Fe4S_Fe-S-bd"/>
</dbReference>
<dbReference type="InterPro" id="IPR017900">
    <property type="entry name" value="4Fe4S_Fe_S_CS"/>
</dbReference>
<dbReference type="InterPro" id="IPR050157">
    <property type="entry name" value="PSI_iron-sulfur_center"/>
</dbReference>
<dbReference type="InterPro" id="IPR017491">
    <property type="entry name" value="PSI_PsaC"/>
</dbReference>
<dbReference type="NCBIfam" id="TIGR03048">
    <property type="entry name" value="PS_I_psaC"/>
    <property type="match status" value="1"/>
</dbReference>
<dbReference type="PANTHER" id="PTHR24960:SF79">
    <property type="entry name" value="PHOTOSYSTEM I IRON-SULFUR CENTER"/>
    <property type="match status" value="1"/>
</dbReference>
<dbReference type="PANTHER" id="PTHR24960">
    <property type="entry name" value="PHOTOSYSTEM I IRON-SULFUR CENTER-RELATED"/>
    <property type="match status" value="1"/>
</dbReference>
<dbReference type="Pfam" id="PF12838">
    <property type="entry name" value="Fer4_7"/>
    <property type="match status" value="1"/>
</dbReference>
<dbReference type="SUPFAM" id="SSF54862">
    <property type="entry name" value="4Fe-4S ferredoxins"/>
    <property type="match status" value="1"/>
</dbReference>
<dbReference type="PROSITE" id="PS00198">
    <property type="entry name" value="4FE4S_FER_1"/>
    <property type="match status" value="2"/>
</dbReference>
<dbReference type="PROSITE" id="PS51379">
    <property type="entry name" value="4FE4S_FER_2"/>
    <property type="match status" value="2"/>
</dbReference>
<sequence length="81" mass="8906">MSHIVKIYDTCIGCTQCVRACPLDVLEMVPWDGCKAEQMASAPRTEDCVGCKRCESACPTDFLSVRVYTSSESTRSMGLAY</sequence>
<comment type="function">
    <text evidence="2">Apoprotein for the two 4Fe-4S centers FA and FB of photosystem I (PSI); essential for photochemical activity. FB is the terminal electron acceptor of PSI, donating electrons to ferredoxin. The C-terminus interacts with PsaA/B/D and helps assemble the protein into the PSI complex. Required for binding of PsaD and PsaE to PSI. PSI is a plastocyanin/cytochrome c6-ferredoxin oxidoreductase, converting photonic excitation into a charge separation, which transfers an electron from the donor P700 chlorophyll pair to the spectroscopically characterized acceptors A0, A1, FX, FA and FB in turn.</text>
</comment>
<comment type="catalytic activity">
    <reaction evidence="2">
        <text>reduced [plastocyanin] + hnu + oxidized [2Fe-2S]-[ferredoxin] = oxidized [plastocyanin] + reduced [2Fe-2S]-[ferredoxin]</text>
        <dbReference type="Rhea" id="RHEA:30407"/>
        <dbReference type="Rhea" id="RHEA-COMP:10000"/>
        <dbReference type="Rhea" id="RHEA-COMP:10001"/>
        <dbReference type="Rhea" id="RHEA-COMP:10039"/>
        <dbReference type="Rhea" id="RHEA-COMP:10040"/>
        <dbReference type="ChEBI" id="CHEBI:29036"/>
        <dbReference type="ChEBI" id="CHEBI:30212"/>
        <dbReference type="ChEBI" id="CHEBI:33737"/>
        <dbReference type="ChEBI" id="CHEBI:33738"/>
        <dbReference type="ChEBI" id="CHEBI:49552"/>
        <dbReference type="EC" id="1.97.1.12"/>
    </reaction>
</comment>
<comment type="cofactor">
    <cofactor evidence="2">
        <name>[4Fe-4S] cluster</name>
        <dbReference type="ChEBI" id="CHEBI:49883"/>
    </cofactor>
    <text evidence="2">Binds 2 [4Fe-4S] clusters. Cluster 2 is most probably the spectroscopically characterized electron acceptor FA and cluster 1 is most probably FB.</text>
</comment>
<comment type="subunit">
    <text evidence="2">The eukaryotic PSI reaction center is composed of at least 11 subunits.</text>
</comment>
<comment type="subcellular location">
    <subcellularLocation>
        <location evidence="2">Plastid</location>
        <location evidence="2">Chloroplast thylakoid membrane</location>
        <topology evidence="2">Peripheral membrane protein</topology>
        <orientation evidence="2">Stromal side</orientation>
    </subcellularLocation>
</comment>
<organism>
    <name type="scientific">Stigeoclonium helveticum</name>
    <name type="common">Green alga</name>
    <dbReference type="NCBI Taxonomy" id="55999"/>
    <lineage>
        <taxon>Eukaryota</taxon>
        <taxon>Viridiplantae</taxon>
        <taxon>Chlorophyta</taxon>
        <taxon>core chlorophytes</taxon>
        <taxon>Chlorophyceae</taxon>
        <taxon>OCC clade</taxon>
        <taxon>Chaetophorales</taxon>
        <taxon>Chaetophoraceae</taxon>
        <taxon>Stigeoclonium</taxon>
    </lineage>
</organism>